<evidence type="ECO:0000250" key="1"/>
<evidence type="ECO:0000255" key="2">
    <source>
        <dbReference type="HAMAP-Rule" id="MF_00047"/>
    </source>
</evidence>
<accession>A3M9X9</accession>
<dbReference type="EC" id="6.3.2.4" evidence="2"/>
<dbReference type="EMBL" id="CP000521">
    <property type="protein sequence ID" value="ABO13723.2"/>
    <property type="molecule type" value="Genomic_DNA"/>
</dbReference>
<dbReference type="RefSeq" id="WP_000063661.1">
    <property type="nucleotide sequence ID" value="NZ_CP053098.1"/>
</dbReference>
<dbReference type="SMR" id="A3M9X9"/>
<dbReference type="KEGG" id="acb:A1S_3334"/>
<dbReference type="HOGENOM" id="CLU_039268_1_2_6"/>
<dbReference type="UniPathway" id="UPA00219"/>
<dbReference type="GO" id="GO:0005829">
    <property type="term" value="C:cytosol"/>
    <property type="evidence" value="ECO:0007669"/>
    <property type="project" value="TreeGrafter"/>
</dbReference>
<dbReference type="GO" id="GO:0005524">
    <property type="term" value="F:ATP binding"/>
    <property type="evidence" value="ECO:0007669"/>
    <property type="project" value="UniProtKB-KW"/>
</dbReference>
<dbReference type="GO" id="GO:0008716">
    <property type="term" value="F:D-alanine-D-alanine ligase activity"/>
    <property type="evidence" value="ECO:0007669"/>
    <property type="project" value="UniProtKB-UniRule"/>
</dbReference>
<dbReference type="GO" id="GO:0046872">
    <property type="term" value="F:metal ion binding"/>
    <property type="evidence" value="ECO:0007669"/>
    <property type="project" value="UniProtKB-KW"/>
</dbReference>
<dbReference type="GO" id="GO:0071555">
    <property type="term" value="P:cell wall organization"/>
    <property type="evidence" value="ECO:0007669"/>
    <property type="project" value="UniProtKB-KW"/>
</dbReference>
<dbReference type="GO" id="GO:0009252">
    <property type="term" value="P:peptidoglycan biosynthetic process"/>
    <property type="evidence" value="ECO:0007669"/>
    <property type="project" value="UniProtKB-UniRule"/>
</dbReference>
<dbReference type="GO" id="GO:0008360">
    <property type="term" value="P:regulation of cell shape"/>
    <property type="evidence" value="ECO:0007669"/>
    <property type="project" value="UniProtKB-KW"/>
</dbReference>
<dbReference type="FunFam" id="3.30.1490.20:FF:000007">
    <property type="entry name" value="D-alanine--D-alanine ligase"/>
    <property type="match status" value="1"/>
</dbReference>
<dbReference type="FunFam" id="3.30.470.20:FF:000008">
    <property type="entry name" value="D-alanine--D-alanine ligase"/>
    <property type="match status" value="1"/>
</dbReference>
<dbReference type="Gene3D" id="3.40.50.20">
    <property type="match status" value="1"/>
</dbReference>
<dbReference type="Gene3D" id="3.30.470.20">
    <property type="entry name" value="ATP-grasp fold, B domain"/>
    <property type="match status" value="1"/>
</dbReference>
<dbReference type="HAMAP" id="MF_00047">
    <property type="entry name" value="Dala_Dala_lig"/>
    <property type="match status" value="1"/>
</dbReference>
<dbReference type="InterPro" id="IPR011761">
    <property type="entry name" value="ATP-grasp"/>
</dbReference>
<dbReference type="InterPro" id="IPR000291">
    <property type="entry name" value="D-Ala_lig_Van_CS"/>
</dbReference>
<dbReference type="InterPro" id="IPR005905">
    <property type="entry name" value="D_ala_D_ala"/>
</dbReference>
<dbReference type="InterPro" id="IPR011095">
    <property type="entry name" value="Dala_Dala_lig_C"/>
</dbReference>
<dbReference type="InterPro" id="IPR011127">
    <property type="entry name" value="Dala_Dala_lig_N"/>
</dbReference>
<dbReference type="InterPro" id="IPR016185">
    <property type="entry name" value="PreATP-grasp_dom_sf"/>
</dbReference>
<dbReference type="NCBIfam" id="TIGR01205">
    <property type="entry name" value="D_ala_D_alaTIGR"/>
    <property type="match status" value="1"/>
</dbReference>
<dbReference type="NCBIfam" id="NF002378">
    <property type="entry name" value="PRK01372.1"/>
    <property type="match status" value="1"/>
</dbReference>
<dbReference type="PANTHER" id="PTHR23132">
    <property type="entry name" value="D-ALANINE--D-ALANINE LIGASE"/>
    <property type="match status" value="1"/>
</dbReference>
<dbReference type="PANTHER" id="PTHR23132:SF23">
    <property type="entry name" value="D-ALANINE--D-ALANINE LIGASE B"/>
    <property type="match status" value="1"/>
</dbReference>
<dbReference type="Pfam" id="PF07478">
    <property type="entry name" value="Dala_Dala_lig_C"/>
    <property type="match status" value="1"/>
</dbReference>
<dbReference type="Pfam" id="PF01820">
    <property type="entry name" value="Dala_Dala_lig_N"/>
    <property type="match status" value="1"/>
</dbReference>
<dbReference type="PIRSF" id="PIRSF039102">
    <property type="entry name" value="Ddl/VanB"/>
    <property type="match status" value="1"/>
</dbReference>
<dbReference type="SUPFAM" id="SSF56059">
    <property type="entry name" value="Glutathione synthetase ATP-binding domain-like"/>
    <property type="match status" value="1"/>
</dbReference>
<dbReference type="SUPFAM" id="SSF52440">
    <property type="entry name" value="PreATP-grasp domain"/>
    <property type="match status" value="1"/>
</dbReference>
<dbReference type="PROSITE" id="PS50975">
    <property type="entry name" value="ATP_GRASP"/>
    <property type="match status" value="1"/>
</dbReference>
<dbReference type="PROSITE" id="PS00843">
    <property type="entry name" value="DALA_DALA_LIGASE_1"/>
    <property type="match status" value="1"/>
</dbReference>
<dbReference type="PROSITE" id="PS00844">
    <property type="entry name" value="DALA_DALA_LIGASE_2"/>
    <property type="match status" value="1"/>
</dbReference>
<gene>
    <name evidence="2" type="primary">ddl</name>
    <name type="ordered locus">A1S_3334</name>
</gene>
<protein>
    <recommendedName>
        <fullName evidence="2">D-alanine--D-alanine ligase</fullName>
        <ecNumber evidence="2">6.3.2.4</ecNumber>
    </recommendedName>
    <alternativeName>
        <fullName evidence="2">D-Ala-D-Ala ligase</fullName>
    </alternativeName>
    <alternativeName>
        <fullName evidence="2">D-alanylalanine synthetase</fullName>
    </alternativeName>
</protein>
<feature type="chain" id="PRO_1000091156" description="D-alanine--D-alanine ligase">
    <location>
        <begin position="1"/>
        <end position="308"/>
    </location>
</feature>
<feature type="domain" description="ATP-grasp" evidence="2">
    <location>
        <begin position="104"/>
        <end position="301"/>
    </location>
</feature>
<feature type="binding site" evidence="2">
    <location>
        <begin position="130"/>
        <end position="185"/>
    </location>
    <ligand>
        <name>ATP</name>
        <dbReference type="ChEBI" id="CHEBI:30616"/>
    </ligand>
</feature>
<feature type="binding site" evidence="2">
    <location>
        <position position="255"/>
    </location>
    <ligand>
        <name>Mg(2+)</name>
        <dbReference type="ChEBI" id="CHEBI:18420"/>
        <label>1</label>
    </ligand>
</feature>
<feature type="binding site" evidence="2">
    <location>
        <position position="268"/>
    </location>
    <ligand>
        <name>Mg(2+)</name>
        <dbReference type="ChEBI" id="CHEBI:18420"/>
        <label>1</label>
    </ligand>
</feature>
<feature type="binding site" evidence="2">
    <location>
        <position position="268"/>
    </location>
    <ligand>
        <name>Mg(2+)</name>
        <dbReference type="ChEBI" id="CHEBI:18420"/>
        <label>2</label>
    </ligand>
</feature>
<feature type="binding site" evidence="2">
    <location>
        <position position="270"/>
    </location>
    <ligand>
        <name>Mg(2+)</name>
        <dbReference type="ChEBI" id="CHEBI:18420"/>
        <label>2</label>
    </ligand>
</feature>
<name>DDL_ACIBT</name>
<sequence length="308" mass="33361">MSNATKFGKVAVLLGGKSAERAVSLDSGQAVLDALLRSGVQAEAFDPQDRSVTELVNYDRAFIVLHGRGGEDGQIQGVLEWLNIPYTGTGVQGSAIGMDKVKTKQIWQGSDLPTAPYRIITKETDLDSVIAELGLPVIIKPVHEGSSVGMSKVEKAEDFAAAIEKATQHDAVVMAEKWITGREFTISFLNGQPLPVIRLQPPADVAFYDYEAKYQRNDVEYGIPCGLSETEEKKLQALCLRAFQAVGAEGWGRIDAMQDEQGNFWLLEVNTVPGMTSHSLVPKAAKAVGYSFDELCVAILEQTLEGTA</sequence>
<reference key="1">
    <citation type="journal article" date="2007" name="Genes Dev.">
        <title>New insights into Acinetobacter baumannii pathogenesis revealed by high-density pyrosequencing and transposon mutagenesis.</title>
        <authorList>
            <person name="Smith M.G."/>
            <person name="Gianoulis T.A."/>
            <person name="Pukatzki S."/>
            <person name="Mekalanos J.J."/>
            <person name="Ornston L.N."/>
            <person name="Gerstein M."/>
            <person name="Snyder M."/>
        </authorList>
    </citation>
    <scope>NUCLEOTIDE SEQUENCE [LARGE SCALE GENOMIC DNA]</scope>
    <source>
        <strain>ATCC 17978 / DSM 105126 / CIP 53.77 / LMG 1025 / NCDC KC755 / 5377</strain>
    </source>
</reference>
<keyword id="KW-0067">ATP-binding</keyword>
<keyword id="KW-0133">Cell shape</keyword>
<keyword id="KW-0961">Cell wall biogenesis/degradation</keyword>
<keyword id="KW-0963">Cytoplasm</keyword>
<keyword id="KW-0436">Ligase</keyword>
<keyword id="KW-0460">Magnesium</keyword>
<keyword id="KW-0464">Manganese</keyword>
<keyword id="KW-0479">Metal-binding</keyword>
<keyword id="KW-0547">Nucleotide-binding</keyword>
<keyword id="KW-0573">Peptidoglycan synthesis</keyword>
<organism>
    <name type="scientific">Acinetobacter baumannii (strain ATCC 17978 / DSM 105126 / CIP 53.77 / LMG 1025 / NCDC KC755 / 5377)</name>
    <dbReference type="NCBI Taxonomy" id="400667"/>
    <lineage>
        <taxon>Bacteria</taxon>
        <taxon>Pseudomonadati</taxon>
        <taxon>Pseudomonadota</taxon>
        <taxon>Gammaproteobacteria</taxon>
        <taxon>Moraxellales</taxon>
        <taxon>Moraxellaceae</taxon>
        <taxon>Acinetobacter</taxon>
        <taxon>Acinetobacter calcoaceticus/baumannii complex</taxon>
    </lineage>
</organism>
<comment type="function">
    <text evidence="2">Cell wall formation.</text>
</comment>
<comment type="catalytic activity">
    <reaction evidence="2">
        <text>2 D-alanine + ATP = D-alanyl-D-alanine + ADP + phosphate + H(+)</text>
        <dbReference type="Rhea" id="RHEA:11224"/>
        <dbReference type="ChEBI" id="CHEBI:15378"/>
        <dbReference type="ChEBI" id="CHEBI:30616"/>
        <dbReference type="ChEBI" id="CHEBI:43474"/>
        <dbReference type="ChEBI" id="CHEBI:57416"/>
        <dbReference type="ChEBI" id="CHEBI:57822"/>
        <dbReference type="ChEBI" id="CHEBI:456216"/>
        <dbReference type="EC" id="6.3.2.4"/>
    </reaction>
</comment>
<comment type="cofactor">
    <cofactor evidence="1">
        <name>Mg(2+)</name>
        <dbReference type="ChEBI" id="CHEBI:18420"/>
    </cofactor>
    <cofactor evidence="1">
        <name>Mn(2+)</name>
        <dbReference type="ChEBI" id="CHEBI:29035"/>
    </cofactor>
    <text evidence="1">Binds 2 magnesium or manganese ions per subunit.</text>
</comment>
<comment type="pathway">
    <text evidence="2">Cell wall biogenesis; peptidoglycan biosynthesis.</text>
</comment>
<comment type="subcellular location">
    <subcellularLocation>
        <location evidence="2">Cytoplasm</location>
    </subcellularLocation>
</comment>
<comment type="similarity">
    <text evidence="2">Belongs to the D-alanine--D-alanine ligase family.</text>
</comment>
<proteinExistence type="inferred from homology"/>